<comment type="function">
    <text evidence="1">Forms oxaloacetate, a four-carbon dicarboxylic acid source for the tricarboxylic acid cycle.</text>
</comment>
<comment type="catalytic activity">
    <reaction evidence="1">
        <text>oxaloacetate + phosphate = phosphoenolpyruvate + hydrogencarbonate</text>
        <dbReference type="Rhea" id="RHEA:28370"/>
        <dbReference type="ChEBI" id="CHEBI:16452"/>
        <dbReference type="ChEBI" id="CHEBI:17544"/>
        <dbReference type="ChEBI" id="CHEBI:43474"/>
        <dbReference type="ChEBI" id="CHEBI:58702"/>
        <dbReference type="EC" id="4.1.1.31"/>
    </reaction>
</comment>
<comment type="cofactor">
    <cofactor evidence="1">
        <name>Mg(2+)</name>
        <dbReference type="ChEBI" id="CHEBI:18420"/>
    </cofactor>
</comment>
<comment type="similarity">
    <text evidence="1">Belongs to the PEPCase type 1 family.</text>
</comment>
<evidence type="ECO:0000255" key="1">
    <source>
        <dbReference type="HAMAP-Rule" id="MF_00595"/>
    </source>
</evidence>
<evidence type="ECO:0000256" key="2">
    <source>
        <dbReference type="SAM" id="MobiDB-lite"/>
    </source>
</evidence>
<protein>
    <recommendedName>
        <fullName evidence="1">Phosphoenolpyruvate carboxylase</fullName>
        <shortName evidence="1">PEPC</shortName>
        <shortName evidence="1">PEPCase</shortName>
        <ecNumber evidence="1">4.1.1.31</ecNumber>
    </recommendedName>
</protein>
<sequence length="904" mass="100268">MNEYRSSLVFATPDLPLRDDVRRLGALVGDLLAEQVSAEFLDEIERVRTTAISRRESDAPPSTLSEQLTGREPRDAEALVRAFSTYFQVVNIAERVHRIRRRREYQRSGTDTPQPDGLHDALRRLKAQGVTLDELSQWLPRIDVEPVFTAHPTEAVRRALLEKEQLMVASLVDNLDGMRTPNERTSDAARFRMALTASWQTADSSPVRPTVGDEREHVGFYLTQVLYRVIPVMYETLEHAIEETYGSVPALPRLLRFGTWVGGDMDGNPNVDANTIAGTLDAQRRAVLDRYQKELWQLASLLSQSTTLVQVSPELMTQLERYRALLPDAAARSRPRHGDMPYRLLNDLMRARLQATLDDADGAYTAPSELEDDLQLILDSLQANKGLHAGWFAVRRLLWRVRSFGFHLARLDVRQESSVHARAVADALGQTDWDAQDATRRAAVLGPYACGQEALPRVQDEGNARLDAVFAALADARTRHGADALGSYIISMAHNRADVLTVLALARRGGLVDAAGAVPLDIVPLFETVDDLRGGTGTVQDLLADPVYRQHLAARGDTQMVMLGYSDSGKDGGIAASRWGLQRAQVELLEAAADLGVRLTFFHGRGGSIARGGGKTSRALDAAPRGSVDGRLRVTEQGEVIHRKYGIRALALRSLEQMTGAVLLSSLRPRAPEPREARWRPVMDLVAERSTVAYRAFVAAPEFMQYFRLATPIDVIERMTLGSRPSRRLGQDAALSNLRAIPWVFAWSQARAVIPGWYGVGSGLQAAVDAGHEDSLREMAQDWPFFRTFLDDVAMVLSKGDLNIAELFSRLSGDLHTRFFPLIRDELALTKGWVKALLQQQSLLQHDPRLALSIRLRNPYIDPISVLQVDLLQRWRATDGEDEALLRALVACVNGVSQGLQNTG</sequence>
<feature type="chain" id="PRO_1000025603" description="Phosphoenolpyruvate carboxylase">
    <location>
        <begin position="1"/>
        <end position="904"/>
    </location>
</feature>
<feature type="region of interest" description="Disordered" evidence="2">
    <location>
        <begin position="52"/>
        <end position="71"/>
    </location>
</feature>
<feature type="active site" evidence="1">
    <location>
        <position position="151"/>
    </location>
</feature>
<feature type="active site" evidence="1">
    <location>
        <position position="570"/>
    </location>
</feature>
<gene>
    <name evidence="1" type="primary">ppc</name>
    <name type="ordered locus">XOO3578</name>
</gene>
<accession>Q2NZE4</accession>
<name>CAPP_XANOM</name>
<proteinExistence type="inferred from homology"/>
<reference key="1">
    <citation type="journal article" date="2005" name="Jpn. Agric. Res. Q.">
        <title>Genome sequence of Xanthomonas oryzae pv. oryzae suggests contribution of large numbers of effector genes and insertion sequences to its race diversity.</title>
        <authorList>
            <person name="Ochiai H."/>
            <person name="Inoue Y."/>
            <person name="Takeya M."/>
            <person name="Sasaki A."/>
            <person name="Kaku H."/>
        </authorList>
    </citation>
    <scope>NUCLEOTIDE SEQUENCE [LARGE SCALE GENOMIC DNA]</scope>
    <source>
        <strain>MAFF 311018</strain>
    </source>
</reference>
<organism>
    <name type="scientific">Xanthomonas oryzae pv. oryzae (strain MAFF 311018)</name>
    <dbReference type="NCBI Taxonomy" id="342109"/>
    <lineage>
        <taxon>Bacteria</taxon>
        <taxon>Pseudomonadati</taxon>
        <taxon>Pseudomonadota</taxon>
        <taxon>Gammaproteobacteria</taxon>
        <taxon>Lysobacterales</taxon>
        <taxon>Lysobacteraceae</taxon>
        <taxon>Xanthomonas</taxon>
    </lineage>
</organism>
<keyword id="KW-0120">Carbon dioxide fixation</keyword>
<keyword id="KW-0456">Lyase</keyword>
<keyword id="KW-0460">Magnesium</keyword>
<dbReference type="EC" id="4.1.1.31" evidence="1"/>
<dbReference type="EMBL" id="AP008229">
    <property type="protein sequence ID" value="BAE70333.1"/>
    <property type="molecule type" value="Genomic_DNA"/>
</dbReference>
<dbReference type="RefSeq" id="WP_011260202.1">
    <property type="nucleotide sequence ID" value="NC_007705.1"/>
</dbReference>
<dbReference type="SMR" id="Q2NZE4"/>
<dbReference type="KEGG" id="xom:XOO3578"/>
<dbReference type="HOGENOM" id="CLU_006557_2_0_6"/>
<dbReference type="GO" id="GO:0005829">
    <property type="term" value="C:cytosol"/>
    <property type="evidence" value="ECO:0007669"/>
    <property type="project" value="TreeGrafter"/>
</dbReference>
<dbReference type="GO" id="GO:0000287">
    <property type="term" value="F:magnesium ion binding"/>
    <property type="evidence" value="ECO:0007669"/>
    <property type="project" value="UniProtKB-UniRule"/>
</dbReference>
<dbReference type="GO" id="GO:0008964">
    <property type="term" value="F:phosphoenolpyruvate carboxylase activity"/>
    <property type="evidence" value="ECO:0007669"/>
    <property type="project" value="UniProtKB-UniRule"/>
</dbReference>
<dbReference type="GO" id="GO:0015977">
    <property type="term" value="P:carbon fixation"/>
    <property type="evidence" value="ECO:0007669"/>
    <property type="project" value="UniProtKB-UniRule"/>
</dbReference>
<dbReference type="GO" id="GO:0006107">
    <property type="term" value="P:oxaloacetate metabolic process"/>
    <property type="evidence" value="ECO:0007669"/>
    <property type="project" value="UniProtKB-UniRule"/>
</dbReference>
<dbReference type="GO" id="GO:0006099">
    <property type="term" value="P:tricarboxylic acid cycle"/>
    <property type="evidence" value="ECO:0007669"/>
    <property type="project" value="InterPro"/>
</dbReference>
<dbReference type="FunFam" id="1.20.1440.90:FF:000004">
    <property type="entry name" value="Phosphoenolpyruvate carboxylase"/>
    <property type="match status" value="1"/>
</dbReference>
<dbReference type="Gene3D" id="1.20.1440.90">
    <property type="entry name" value="Phosphoenolpyruvate/pyruvate domain"/>
    <property type="match status" value="1"/>
</dbReference>
<dbReference type="HAMAP" id="MF_00595">
    <property type="entry name" value="PEPcase_type1"/>
    <property type="match status" value="1"/>
</dbReference>
<dbReference type="InterPro" id="IPR021135">
    <property type="entry name" value="PEP_COase"/>
</dbReference>
<dbReference type="InterPro" id="IPR022805">
    <property type="entry name" value="PEP_COase_bac/pln-type"/>
</dbReference>
<dbReference type="InterPro" id="IPR018129">
    <property type="entry name" value="PEP_COase_Lys_AS"/>
</dbReference>
<dbReference type="InterPro" id="IPR033129">
    <property type="entry name" value="PEPCASE_His_AS"/>
</dbReference>
<dbReference type="InterPro" id="IPR015813">
    <property type="entry name" value="Pyrv/PenolPyrv_kinase-like_dom"/>
</dbReference>
<dbReference type="NCBIfam" id="NF000584">
    <property type="entry name" value="PRK00009.1"/>
    <property type="match status" value="1"/>
</dbReference>
<dbReference type="PANTHER" id="PTHR30523">
    <property type="entry name" value="PHOSPHOENOLPYRUVATE CARBOXYLASE"/>
    <property type="match status" value="1"/>
</dbReference>
<dbReference type="PANTHER" id="PTHR30523:SF6">
    <property type="entry name" value="PHOSPHOENOLPYRUVATE CARBOXYLASE"/>
    <property type="match status" value="1"/>
</dbReference>
<dbReference type="Pfam" id="PF00311">
    <property type="entry name" value="PEPcase"/>
    <property type="match status" value="1"/>
</dbReference>
<dbReference type="PRINTS" id="PR00150">
    <property type="entry name" value="PEPCARBXLASE"/>
</dbReference>
<dbReference type="SUPFAM" id="SSF51621">
    <property type="entry name" value="Phosphoenolpyruvate/pyruvate domain"/>
    <property type="match status" value="1"/>
</dbReference>
<dbReference type="PROSITE" id="PS00781">
    <property type="entry name" value="PEPCASE_1"/>
    <property type="match status" value="1"/>
</dbReference>
<dbReference type="PROSITE" id="PS00393">
    <property type="entry name" value="PEPCASE_2"/>
    <property type="match status" value="1"/>
</dbReference>